<feature type="chain" id="PRO_1000140620" description="Small ribosomal subunit protein uS8">
    <location>
        <begin position="1"/>
        <end position="132"/>
    </location>
</feature>
<name>RS8_STRPI</name>
<reference key="1">
    <citation type="journal article" date="2010" name="Genome Biol.">
        <title>Structure and dynamics of the pan-genome of Streptococcus pneumoniae and closely related species.</title>
        <authorList>
            <person name="Donati C."/>
            <person name="Hiller N.L."/>
            <person name="Tettelin H."/>
            <person name="Muzzi A."/>
            <person name="Croucher N.J."/>
            <person name="Angiuoli S.V."/>
            <person name="Oggioni M."/>
            <person name="Dunning Hotopp J.C."/>
            <person name="Hu F.Z."/>
            <person name="Riley D.R."/>
            <person name="Covacci A."/>
            <person name="Mitchell T.J."/>
            <person name="Bentley S.D."/>
            <person name="Kilian M."/>
            <person name="Ehrlich G.D."/>
            <person name="Rappuoli R."/>
            <person name="Moxon E.R."/>
            <person name="Masignani V."/>
        </authorList>
    </citation>
    <scope>NUCLEOTIDE SEQUENCE [LARGE SCALE GENOMIC DNA]</scope>
    <source>
        <strain>Hungary19A-6</strain>
    </source>
</reference>
<comment type="function">
    <text evidence="1">One of the primary rRNA binding proteins, it binds directly to 16S rRNA central domain where it helps coordinate assembly of the platform of the 30S subunit.</text>
</comment>
<comment type="subunit">
    <text evidence="1">Part of the 30S ribosomal subunit. Contacts proteins S5 and S12.</text>
</comment>
<comment type="similarity">
    <text evidence="1">Belongs to the universal ribosomal protein uS8 family.</text>
</comment>
<protein>
    <recommendedName>
        <fullName evidence="1">Small ribosomal subunit protein uS8</fullName>
    </recommendedName>
    <alternativeName>
        <fullName evidence="2">30S ribosomal protein S8</fullName>
    </alternativeName>
</protein>
<keyword id="KW-0687">Ribonucleoprotein</keyword>
<keyword id="KW-0689">Ribosomal protein</keyword>
<keyword id="KW-0694">RNA-binding</keyword>
<keyword id="KW-0699">rRNA-binding</keyword>
<dbReference type="EMBL" id="CP000936">
    <property type="protein sequence ID" value="ACA36033.1"/>
    <property type="molecule type" value="Genomic_DNA"/>
</dbReference>
<dbReference type="RefSeq" id="WP_000245505.1">
    <property type="nucleotide sequence ID" value="NC_010380.1"/>
</dbReference>
<dbReference type="SMR" id="B1I8L2"/>
<dbReference type="GeneID" id="45652295"/>
<dbReference type="KEGG" id="spv:SPH_0337"/>
<dbReference type="HOGENOM" id="CLU_098428_0_2_9"/>
<dbReference type="Proteomes" id="UP000002163">
    <property type="component" value="Chromosome"/>
</dbReference>
<dbReference type="GO" id="GO:1990904">
    <property type="term" value="C:ribonucleoprotein complex"/>
    <property type="evidence" value="ECO:0007669"/>
    <property type="project" value="UniProtKB-KW"/>
</dbReference>
<dbReference type="GO" id="GO:0005840">
    <property type="term" value="C:ribosome"/>
    <property type="evidence" value="ECO:0007669"/>
    <property type="project" value="UniProtKB-KW"/>
</dbReference>
<dbReference type="GO" id="GO:0019843">
    <property type="term" value="F:rRNA binding"/>
    <property type="evidence" value="ECO:0007669"/>
    <property type="project" value="UniProtKB-UniRule"/>
</dbReference>
<dbReference type="GO" id="GO:0003735">
    <property type="term" value="F:structural constituent of ribosome"/>
    <property type="evidence" value="ECO:0007669"/>
    <property type="project" value="InterPro"/>
</dbReference>
<dbReference type="GO" id="GO:0006412">
    <property type="term" value="P:translation"/>
    <property type="evidence" value="ECO:0007669"/>
    <property type="project" value="UniProtKB-UniRule"/>
</dbReference>
<dbReference type="FunFam" id="3.30.1370.30:FF:000002">
    <property type="entry name" value="30S ribosomal protein S8"/>
    <property type="match status" value="1"/>
</dbReference>
<dbReference type="FunFam" id="3.30.1490.10:FF:000001">
    <property type="entry name" value="30S ribosomal protein S8"/>
    <property type="match status" value="1"/>
</dbReference>
<dbReference type="Gene3D" id="3.30.1370.30">
    <property type="match status" value="1"/>
</dbReference>
<dbReference type="Gene3D" id="3.30.1490.10">
    <property type="match status" value="1"/>
</dbReference>
<dbReference type="HAMAP" id="MF_01302_B">
    <property type="entry name" value="Ribosomal_uS8_B"/>
    <property type="match status" value="1"/>
</dbReference>
<dbReference type="InterPro" id="IPR000630">
    <property type="entry name" value="Ribosomal_uS8"/>
</dbReference>
<dbReference type="InterPro" id="IPR047863">
    <property type="entry name" value="Ribosomal_uS8_CS"/>
</dbReference>
<dbReference type="InterPro" id="IPR035987">
    <property type="entry name" value="Ribosomal_uS8_sf"/>
</dbReference>
<dbReference type="NCBIfam" id="NF001109">
    <property type="entry name" value="PRK00136.1"/>
    <property type="match status" value="1"/>
</dbReference>
<dbReference type="PANTHER" id="PTHR11758">
    <property type="entry name" value="40S RIBOSOMAL PROTEIN S15A"/>
    <property type="match status" value="1"/>
</dbReference>
<dbReference type="Pfam" id="PF00410">
    <property type="entry name" value="Ribosomal_S8"/>
    <property type="match status" value="1"/>
</dbReference>
<dbReference type="SUPFAM" id="SSF56047">
    <property type="entry name" value="Ribosomal protein S8"/>
    <property type="match status" value="1"/>
</dbReference>
<dbReference type="PROSITE" id="PS00053">
    <property type="entry name" value="RIBOSOMAL_S8"/>
    <property type="match status" value="1"/>
</dbReference>
<evidence type="ECO:0000255" key="1">
    <source>
        <dbReference type="HAMAP-Rule" id="MF_01302"/>
    </source>
</evidence>
<evidence type="ECO:0000305" key="2"/>
<gene>
    <name evidence="1" type="primary">rpsH</name>
    <name type="ordered locus">SPH_0337</name>
</gene>
<proteinExistence type="inferred from homology"/>
<sequence>MVMTDPIADFLTRIRNANQAKHEVLEVPASNIKKGIAEILKREGFVKNVEIIEDDKQGVIRVFLKYGPNGEKVITNLKRVSKPGLRVYKKREDLPKVLNGLGIAILSTSEGLLTDKEARQKNVGGEVIAYVW</sequence>
<accession>B1I8L2</accession>
<organism>
    <name type="scientific">Streptococcus pneumoniae (strain Hungary19A-6)</name>
    <dbReference type="NCBI Taxonomy" id="487214"/>
    <lineage>
        <taxon>Bacteria</taxon>
        <taxon>Bacillati</taxon>
        <taxon>Bacillota</taxon>
        <taxon>Bacilli</taxon>
        <taxon>Lactobacillales</taxon>
        <taxon>Streptococcaceae</taxon>
        <taxon>Streptococcus</taxon>
    </lineage>
</organism>